<dbReference type="EC" id="3.1.-.-" evidence="1"/>
<dbReference type="EMBL" id="CP000948">
    <property type="protein sequence ID" value="ACB03911.1"/>
    <property type="status" value="ALT_INIT"/>
    <property type="molecule type" value="Genomic_DNA"/>
</dbReference>
<dbReference type="RefSeq" id="WP_000268232.1">
    <property type="nucleotide sequence ID" value="NC_010473.1"/>
</dbReference>
<dbReference type="SMR" id="B1XDK7"/>
<dbReference type="GeneID" id="93779200"/>
<dbReference type="KEGG" id="ecd:ECDH10B_2967"/>
<dbReference type="HOGENOM" id="CLU_004675_1_2_6"/>
<dbReference type="GO" id="GO:0008409">
    <property type="term" value="F:5'-3' exonuclease activity"/>
    <property type="evidence" value="ECO:0007669"/>
    <property type="project" value="InterPro"/>
</dbReference>
<dbReference type="GO" id="GO:0017108">
    <property type="term" value="F:5'-flap endonuclease activity"/>
    <property type="evidence" value="ECO:0007669"/>
    <property type="project" value="UniProtKB-UniRule"/>
</dbReference>
<dbReference type="GO" id="GO:0003677">
    <property type="term" value="F:DNA binding"/>
    <property type="evidence" value="ECO:0007669"/>
    <property type="project" value="UniProtKB-UniRule"/>
</dbReference>
<dbReference type="GO" id="GO:0000287">
    <property type="term" value="F:magnesium ion binding"/>
    <property type="evidence" value="ECO:0007669"/>
    <property type="project" value="UniProtKB-UniRule"/>
</dbReference>
<dbReference type="GO" id="GO:0030955">
    <property type="term" value="F:potassium ion binding"/>
    <property type="evidence" value="ECO:0007669"/>
    <property type="project" value="UniProtKB-UniRule"/>
</dbReference>
<dbReference type="GO" id="GO:0033567">
    <property type="term" value="P:DNA replication, Okazaki fragment processing"/>
    <property type="evidence" value="ECO:0007669"/>
    <property type="project" value="UniProtKB-UniRule"/>
</dbReference>
<dbReference type="CDD" id="cd09898">
    <property type="entry name" value="H3TH_53EXO"/>
    <property type="match status" value="1"/>
</dbReference>
<dbReference type="CDD" id="cd09859">
    <property type="entry name" value="PIN_53EXO"/>
    <property type="match status" value="1"/>
</dbReference>
<dbReference type="FunFam" id="1.10.150.20:FF:000003">
    <property type="entry name" value="DNA polymerase I"/>
    <property type="match status" value="1"/>
</dbReference>
<dbReference type="FunFam" id="3.40.50.1010:FF:000011">
    <property type="entry name" value="Flap endonuclease Xni"/>
    <property type="match status" value="1"/>
</dbReference>
<dbReference type="Gene3D" id="1.10.150.20">
    <property type="entry name" value="5' to 3' exonuclease, C-terminal subdomain"/>
    <property type="match status" value="1"/>
</dbReference>
<dbReference type="Gene3D" id="3.40.50.1010">
    <property type="entry name" value="5'-nuclease"/>
    <property type="match status" value="1"/>
</dbReference>
<dbReference type="HAMAP" id="MF_01192">
    <property type="entry name" value="Xni"/>
    <property type="match status" value="1"/>
</dbReference>
<dbReference type="InterPro" id="IPR020046">
    <property type="entry name" value="5-3_exonucl_a-hlix_arch_N"/>
</dbReference>
<dbReference type="InterPro" id="IPR002421">
    <property type="entry name" value="5-3_exonuclease"/>
</dbReference>
<dbReference type="InterPro" id="IPR036279">
    <property type="entry name" value="5-3_exonuclease_C_sf"/>
</dbReference>
<dbReference type="InterPro" id="IPR020045">
    <property type="entry name" value="DNA_polI_H3TH"/>
</dbReference>
<dbReference type="InterPro" id="IPR038969">
    <property type="entry name" value="FEN"/>
</dbReference>
<dbReference type="InterPro" id="IPR008918">
    <property type="entry name" value="HhH2"/>
</dbReference>
<dbReference type="InterPro" id="IPR029060">
    <property type="entry name" value="PIN-like_dom_sf"/>
</dbReference>
<dbReference type="InterPro" id="IPR022895">
    <property type="entry name" value="Xni"/>
</dbReference>
<dbReference type="NCBIfam" id="NF007017">
    <property type="entry name" value="PRK09482.1"/>
    <property type="match status" value="1"/>
</dbReference>
<dbReference type="PANTHER" id="PTHR42646:SF2">
    <property type="entry name" value="5'-3' EXONUCLEASE FAMILY PROTEIN"/>
    <property type="match status" value="1"/>
</dbReference>
<dbReference type="PANTHER" id="PTHR42646">
    <property type="entry name" value="FLAP ENDONUCLEASE XNI"/>
    <property type="match status" value="1"/>
</dbReference>
<dbReference type="Pfam" id="PF01367">
    <property type="entry name" value="5_3_exonuc"/>
    <property type="match status" value="1"/>
</dbReference>
<dbReference type="Pfam" id="PF02739">
    <property type="entry name" value="5_3_exonuc_N"/>
    <property type="match status" value="1"/>
</dbReference>
<dbReference type="SMART" id="SM00475">
    <property type="entry name" value="53EXOc"/>
    <property type="match status" value="1"/>
</dbReference>
<dbReference type="SMART" id="SM00279">
    <property type="entry name" value="HhH2"/>
    <property type="match status" value="1"/>
</dbReference>
<dbReference type="SUPFAM" id="SSF47807">
    <property type="entry name" value="5' to 3' exonuclease, C-terminal subdomain"/>
    <property type="match status" value="1"/>
</dbReference>
<dbReference type="SUPFAM" id="SSF88723">
    <property type="entry name" value="PIN domain-like"/>
    <property type="match status" value="1"/>
</dbReference>
<organism>
    <name type="scientific">Escherichia coli (strain K12 / DH10B)</name>
    <dbReference type="NCBI Taxonomy" id="316385"/>
    <lineage>
        <taxon>Bacteria</taxon>
        <taxon>Pseudomonadati</taxon>
        <taxon>Pseudomonadota</taxon>
        <taxon>Gammaproteobacteria</taxon>
        <taxon>Enterobacterales</taxon>
        <taxon>Enterobacteriaceae</taxon>
        <taxon>Escherichia</taxon>
    </lineage>
</organism>
<gene>
    <name evidence="1" type="primary">xni</name>
    <name evidence="1" type="synonym">ygdG</name>
    <name type="ordered locus">ECDH10B_2967</name>
</gene>
<proteinExistence type="inferred from homology"/>
<reference key="1">
    <citation type="journal article" date="2008" name="J. Bacteriol.">
        <title>The complete genome sequence of Escherichia coli DH10B: insights into the biology of a laboratory workhorse.</title>
        <authorList>
            <person name="Durfee T."/>
            <person name="Nelson R."/>
            <person name="Baldwin S."/>
            <person name="Plunkett G. III"/>
            <person name="Burland V."/>
            <person name="Mau B."/>
            <person name="Petrosino J.F."/>
            <person name="Qin X."/>
            <person name="Muzny D.M."/>
            <person name="Ayele M."/>
            <person name="Gibbs R.A."/>
            <person name="Csorgo B."/>
            <person name="Posfai G."/>
            <person name="Weinstock G.M."/>
            <person name="Blattner F.R."/>
        </authorList>
    </citation>
    <scope>NUCLEOTIDE SEQUENCE [LARGE SCALE GENOMIC DNA]</scope>
    <source>
        <strain>K12 / DH10B</strain>
    </source>
</reference>
<protein>
    <recommendedName>
        <fullName evidence="1">Flap endonuclease Xni</fullName>
        <shortName evidence="1">FEN</shortName>
        <ecNumber evidence="1">3.1.-.-</ecNumber>
    </recommendedName>
</protein>
<accession>B1XDK7</accession>
<feature type="chain" id="PRO_1000138381" description="Flap endonuclease Xni">
    <location>
        <begin position="1"/>
        <end position="251"/>
    </location>
</feature>
<feature type="domain" description="5'-3' exonuclease" evidence="1">
    <location>
        <begin position="160"/>
        <end position="249"/>
    </location>
</feature>
<feature type="region of interest" description="Interaction with DNA" evidence="1">
    <location>
        <begin position="184"/>
        <end position="189"/>
    </location>
</feature>
<feature type="binding site" evidence="1">
    <location>
        <position position="104"/>
    </location>
    <ligand>
        <name>Mg(2+)</name>
        <dbReference type="ChEBI" id="CHEBI:18420"/>
    </ligand>
</feature>
<feature type="binding site" evidence="1">
    <location>
        <position position="171"/>
    </location>
    <ligand>
        <name>K(+)</name>
        <dbReference type="ChEBI" id="CHEBI:29103"/>
    </ligand>
</feature>
<feature type="binding site" evidence="1">
    <location>
        <position position="172"/>
    </location>
    <ligand>
        <name>K(+)</name>
        <dbReference type="ChEBI" id="CHEBI:29103"/>
    </ligand>
</feature>
<feature type="binding site" evidence="1">
    <location>
        <position position="180"/>
    </location>
    <ligand>
        <name>K(+)</name>
        <dbReference type="ChEBI" id="CHEBI:29103"/>
    </ligand>
</feature>
<feature type="binding site" evidence="1">
    <location>
        <position position="182"/>
    </location>
    <ligand>
        <name>K(+)</name>
        <dbReference type="ChEBI" id="CHEBI:29103"/>
    </ligand>
</feature>
<feature type="binding site" evidence="1">
    <location>
        <position position="185"/>
    </location>
    <ligand>
        <name>K(+)</name>
        <dbReference type="ChEBI" id="CHEBI:29103"/>
    </ligand>
</feature>
<name>XNI_ECODH</name>
<keyword id="KW-0238">DNA-binding</keyword>
<keyword id="KW-0255">Endonuclease</keyword>
<keyword id="KW-0378">Hydrolase</keyword>
<keyword id="KW-0460">Magnesium</keyword>
<keyword id="KW-0479">Metal-binding</keyword>
<keyword id="KW-0540">Nuclease</keyword>
<keyword id="KW-0630">Potassium</keyword>
<comment type="function">
    <text evidence="1">Has flap endonuclease activity. During DNA replication, flap endonucleases cleave the 5'-overhanging flap structure that is generated by displacement synthesis when DNA polymerase encounters the 5'-end of a downstream Okazaki fragment.</text>
</comment>
<comment type="cofactor">
    <cofactor evidence="1">
        <name>Mg(2+)</name>
        <dbReference type="ChEBI" id="CHEBI:18420"/>
    </cofactor>
    <text evidence="1">Binds 2 Mg(2+) per subunit. Only one magnesium ion has a direct interaction with the protein, the other interactions are indirect.</text>
</comment>
<comment type="cofactor">
    <cofactor evidence="1">
        <name>K(+)</name>
        <dbReference type="ChEBI" id="CHEBI:29103"/>
    </cofactor>
    <text evidence="1">Binds 1 K(+) per subunit. The potassium ion strongly increases the affinity for DNA.</text>
</comment>
<comment type="similarity">
    <text evidence="1">Belongs to the Xni family.</text>
</comment>
<comment type="sequence caution" evidence="2">
    <conflict type="erroneous initiation">
        <sequence resource="EMBL-CDS" id="ACB03911"/>
    </conflict>
    <text>Extended N-terminus.</text>
</comment>
<evidence type="ECO:0000255" key="1">
    <source>
        <dbReference type="HAMAP-Rule" id="MF_01192"/>
    </source>
</evidence>
<evidence type="ECO:0000305" key="2"/>
<sequence length="251" mass="28166">MAVHLLIVDALNLIRRIHAVQGSPCVETCQHALDQLIMHSQPTHAVAVFDDENRSSGWRHQRLPDYKAGRPPMPEELHDEMPALRAAFEQRGVPCWSTSGNEADDLAATLAVKVTQAGHQATIVSTDKGYCQLLSPTLRIRDYFQKRWLDAPFIDKEFGVQPQQLPDYWGLAGISSSKVPGVAGIGPKSATQLLVEFQSLEGIYENLDAVAEKWRKKLETHKEMAFLCRDIARLQTDLHIDGNLQQLRLVR</sequence>